<feature type="chain" id="PRO_1000119425" description="Small ribosomal subunit protein uS2">
    <location>
        <begin position="1"/>
        <end position="241"/>
    </location>
</feature>
<name>RS2_ECO7I</name>
<sequence length="241" mass="26744">MATVSMRDMLKAGVHFGHQTRYWNPKMKPFIFGARNKVHIINLEKTVPMFNEALAELNKIASRKGKILFVGTKRAASEAVKDAALSCDQFFVNHRWLGGMLTNWKTVRQSIKRLKDLETQSQDGTFDKLTKKEALMRTRELEKLENSLGGIKDMGGLPDALFVIDADHEHIAIKEANNLGIPVFAIVDTNSDPDGVDFVIPGNDDAIRAVTLYLGAVAATVREGRSQDLASQAEESFVEAE</sequence>
<keyword id="KW-0687">Ribonucleoprotein</keyword>
<keyword id="KW-0689">Ribosomal protein</keyword>
<protein>
    <recommendedName>
        <fullName evidence="1">Small ribosomal subunit protein uS2</fullName>
    </recommendedName>
    <alternativeName>
        <fullName evidence="2">30S ribosomal protein S2</fullName>
    </alternativeName>
</protein>
<dbReference type="EMBL" id="CU928164">
    <property type="protein sequence ID" value="CAR16311.1"/>
    <property type="molecule type" value="Genomic_DNA"/>
</dbReference>
<dbReference type="RefSeq" id="WP_000246882.1">
    <property type="nucleotide sequence ID" value="NC_011750.1"/>
</dbReference>
<dbReference type="RefSeq" id="YP_002406217.1">
    <property type="nucleotide sequence ID" value="NC_011750.1"/>
</dbReference>
<dbReference type="SMR" id="B7NID0"/>
<dbReference type="STRING" id="585057.ECIAI39_0171"/>
<dbReference type="GeneID" id="89519558"/>
<dbReference type="KEGG" id="ect:ECIAI39_0171"/>
<dbReference type="PATRIC" id="fig|585057.6.peg.184"/>
<dbReference type="HOGENOM" id="CLU_040318_1_2_6"/>
<dbReference type="Proteomes" id="UP000000749">
    <property type="component" value="Chromosome"/>
</dbReference>
<dbReference type="GO" id="GO:0022627">
    <property type="term" value="C:cytosolic small ribosomal subunit"/>
    <property type="evidence" value="ECO:0007669"/>
    <property type="project" value="TreeGrafter"/>
</dbReference>
<dbReference type="GO" id="GO:0003735">
    <property type="term" value="F:structural constituent of ribosome"/>
    <property type="evidence" value="ECO:0007669"/>
    <property type="project" value="InterPro"/>
</dbReference>
<dbReference type="GO" id="GO:0006412">
    <property type="term" value="P:translation"/>
    <property type="evidence" value="ECO:0007669"/>
    <property type="project" value="UniProtKB-UniRule"/>
</dbReference>
<dbReference type="CDD" id="cd01425">
    <property type="entry name" value="RPS2"/>
    <property type="match status" value="1"/>
</dbReference>
<dbReference type="FunFam" id="1.10.287.610:FF:000001">
    <property type="entry name" value="30S ribosomal protein S2"/>
    <property type="match status" value="1"/>
</dbReference>
<dbReference type="Gene3D" id="3.40.50.10490">
    <property type="entry name" value="Glucose-6-phosphate isomerase like protein, domain 1"/>
    <property type="match status" value="1"/>
</dbReference>
<dbReference type="Gene3D" id="1.10.287.610">
    <property type="entry name" value="Helix hairpin bin"/>
    <property type="match status" value="1"/>
</dbReference>
<dbReference type="HAMAP" id="MF_00291_B">
    <property type="entry name" value="Ribosomal_uS2_B"/>
    <property type="match status" value="1"/>
</dbReference>
<dbReference type="InterPro" id="IPR001865">
    <property type="entry name" value="Ribosomal_uS2"/>
</dbReference>
<dbReference type="InterPro" id="IPR005706">
    <property type="entry name" value="Ribosomal_uS2_bac/mit/plastid"/>
</dbReference>
<dbReference type="InterPro" id="IPR018130">
    <property type="entry name" value="Ribosomal_uS2_CS"/>
</dbReference>
<dbReference type="InterPro" id="IPR023591">
    <property type="entry name" value="Ribosomal_uS2_flav_dom_sf"/>
</dbReference>
<dbReference type="NCBIfam" id="TIGR01011">
    <property type="entry name" value="rpsB_bact"/>
    <property type="match status" value="1"/>
</dbReference>
<dbReference type="PANTHER" id="PTHR12534">
    <property type="entry name" value="30S RIBOSOMAL PROTEIN S2 PROKARYOTIC AND ORGANELLAR"/>
    <property type="match status" value="1"/>
</dbReference>
<dbReference type="PANTHER" id="PTHR12534:SF0">
    <property type="entry name" value="SMALL RIBOSOMAL SUBUNIT PROTEIN US2M"/>
    <property type="match status" value="1"/>
</dbReference>
<dbReference type="Pfam" id="PF00318">
    <property type="entry name" value="Ribosomal_S2"/>
    <property type="match status" value="1"/>
</dbReference>
<dbReference type="PRINTS" id="PR00395">
    <property type="entry name" value="RIBOSOMALS2"/>
</dbReference>
<dbReference type="SUPFAM" id="SSF52313">
    <property type="entry name" value="Ribosomal protein S2"/>
    <property type="match status" value="1"/>
</dbReference>
<dbReference type="PROSITE" id="PS00962">
    <property type="entry name" value="RIBOSOMAL_S2_1"/>
    <property type="match status" value="1"/>
</dbReference>
<dbReference type="PROSITE" id="PS00963">
    <property type="entry name" value="RIBOSOMAL_S2_2"/>
    <property type="match status" value="1"/>
</dbReference>
<proteinExistence type="inferred from homology"/>
<evidence type="ECO:0000255" key="1">
    <source>
        <dbReference type="HAMAP-Rule" id="MF_00291"/>
    </source>
</evidence>
<evidence type="ECO:0000305" key="2"/>
<comment type="similarity">
    <text evidence="1">Belongs to the universal ribosomal protein uS2 family.</text>
</comment>
<organism>
    <name type="scientific">Escherichia coli O7:K1 (strain IAI39 / ExPEC)</name>
    <dbReference type="NCBI Taxonomy" id="585057"/>
    <lineage>
        <taxon>Bacteria</taxon>
        <taxon>Pseudomonadati</taxon>
        <taxon>Pseudomonadota</taxon>
        <taxon>Gammaproteobacteria</taxon>
        <taxon>Enterobacterales</taxon>
        <taxon>Enterobacteriaceae</taxon>
        <taxon>Escherichia</taxon>
    </lineage>
</organism>
<reference key="1">
    <citation type="journal article" date="2009" name="PLoS Genet.">
        <title>Organised genome dynamics in the Escherichia coli species results in highly diverse adaptive paths.</title>
        <authorList>
            <person name="Touchon M."/>
            <person name="Hoede C."/>
            <person name="Tenaillon O."/>
            <person name="Barbe V."/>
            <person name="Baeriswyl S."/>
            <person name="Bidet P."/>
            <person name="Bingen E."/>
            <person name="Bonacorsi S."/>
            <person name="Bouchier C."/>
            <person name="Bouvet O."/>
            <person name="Calteau A."/>
            <person name="Chiapello H."/>
            <person name="Clermont O."/>
            <person name="Cruveiller S."/>
            <person name="Danchin A."/>
            <person name="Diard M."/>
            <person name="Dossat C."/>
            <person name="Karoui M.E."/>
            <person name="Frapy E."/>
            <person name="Garry L."/>
            <person name="Ghigo J.M."/>
            <person name="Gilles A.M."/>
            <person name="Johnson J."/>
            <person name="Le Bouguenec C."/>
            <person name="Lescat M."/>
            <person name="Mangenot S."/>
            <person name="Martinez-Jehanne V."/>
            <person name="Matic I."/>
            <person name="Nassif X."/>
            <person name="Oztas S."/>
            <person name="Petit M.A."/>
            <person name="Pichon C."/>
            <person name="Rouy Z."/>
            <person name="Ruf C.S."/>
            <person name="Schneider D."/>
            <person name="Tourret J."/>
            <person name="Vacherie B."/>
            <person name="Vallenet D."/>
            <person name="Medigue C."/>
            <person name="Rocha E.P.C."/>
            <person name="Denamur E."/>
        </authorList>
    </citation>
    <scope>NUCLEOTIDE SEQUENCE [LARGE SCALE GENOMIC DNA]</scope>
    <source>
        <strain>IAI39 / ExPEC</strain>
    </source>
</reference>
<gene>
    <name evidence="1" type="primary">rpsB</name>
    <name type="ordered locus">ECIAI39_0171</name>
</gene>
<accession>B7NID0</accession>